<organism>
    <name type="scientific">Streptomyces griseus subsp. griseus (strain JCM 4626 / CBS 651.72 / NBRC 13350 / KCC S-0626 / ISP 5235)</name>
    <dbReference type="NCBI Taxonomy" id="455632"/>
    <lineage>
        <taxon>Bacteria</taxon>
        <taxon>Bacillati</taxon>
        <taxon>Actinomycetota</taxon>
        <taxon>Actinomycetes</taxon>
        <taxon>Kitasatosporales</taxon>
        <taxon>Streptomycetaceae</taxon>
        <taxon>Streptomyces</taxon>
    </lineage>
</organism>
<protein>
    <recommendedName>
        <fullName evidence="1">Nucleotide-binding protein SGR_5570</fullName>
    </recommendedName>
</protein>
<accession>B1W0Y9</accession>
<sequence>MTENTHETAPNTADTDTADFDTADTDRADGAADVSTNTPNETGEAAIPELVIISGMSGAGRSTAAKCLEDLGWFVVDNLPPALIPTMVELGARSQGNVARIAVVVDVRGRRFFDNLRESLADLEAKHVTRRIVFLESSDDALVRRFESVRRPHPLQGDGRIVDGIAAERDLLRELRGDADLVIDTSSLNVHELRAKMDAQFAGESEPELRATVMSFGYKYGLPVDADLVVDCRFLPNPHWVPELRPFTGVNEEVSDYVFDQPGAKEFLNQYTELLQLIAAGYRREGKRYVTIAVGCTGGKHRSVAMSEKLSARLAAEGIETVLVHRDMGRE</sequence>
<comment type="function">
    <text evidence="1">Displays ATPase and GTPase activities.</text>
</comment>
<comment type="similarity">
    <text evidence="1">Belongs to the RapZ-like family.</text>
</comment>
<reference key="1">
    <citation type="journal article" date="2008" name="J. Bacteriol.">
        <title>Genome sequence of the streptomycin-producing microorganism Streptomyces griseus IFO 13350.</title>
        <authorList>
            <person name="Ohnishi Y."/>
            <person name="Ishikawa J."/>
            <person name="Hara H."/>
            <person name="Suzuki H."/>
            <person name="Ikenoya M."/>
            <person name="Ikeda H."/>
            <person name="Yamashita A."/>
            <person name="Hattori M."/>
            <person name="Horinouchi S."/>
        </authorList>
    </citation>
    <scope>NUCLEOTIDE SEQUENCE [LARGE SCALE GENOMIC DNA]</scope>
    <source>
        <strain>JCM 4626 / CBS 651.72 / NBRC 13350 / KCC S-0626 / ISP 5235</strain>
    </source>
</reference>
<name>Y5570_STRGG</name>
<keyword id="KW-0067">ATP-binding</keyword>
<keyword id="KW-0342">GTP-binding</keyword>
<keyword id="KW-0547">Nucleotide-binding</keyword>
<evidence type="ECO:0000255" key="1">
    <source>
        <dbReference type="HAMAP-Rule" id="MF_00636"/>
    </source>
</evidence>
<evidence type="ECO:0000256" key="2">
    <source>
        <dbReference type="SAM" id="MobiDB-lite"/>
    </source>
</evidence>
<dbReference type="EMBL" id="AP009493">
    <property type="protein sequence ID" value="BAG22399.1"/>
    <property type="molecule type" value="Genomic_DNA"/>
</dbReference>
<dbReference type="SMR" id="B1W0Y9"/>
<dbReference type="KEGG" id="sgr:SGR_5570"/>
<dbReference type="eggNOG" id="COG1660">
    <property type="taxonomic scope" value="Bacteria"/>
</dbReference>
<dbReference type="HOGENOM" id="CLU_059558_0_0_11"/>
<dbReference type="Proteomes" id="UP000001685">
    <property type="component" value="Chromosome"/>
</dbReference>
<dbReference type="GO" id="GO:0005524">
    <property type="term" value="F:ATP binding"/>
    <property type="evidence" value="ECO:0007669"/>
    <property type="project" value="UniProtKB-UniRule"/>
</dbReference>
<dbReference type="GO" id="GO:0005525">
    <property type="term" value="F:GTP binding"/>
    <property type="evidence" value="ECO:0007669"/>
    <property type="project" value="UniProtKB-UniRule"/>
</dbReference>
<dbReference type="HAMAP" id="MF_00636">
    <property type="entry name" value="RapZ_like"/>
    <property type="match status" value="1"/>
</dbReference>
<dbReference type="InterPro" id="IPR027417">
    <property type="entry name" value="P-loop_NTPase"/>
</dbReference>
<dbReference type="InterPro" id="IPR005337">
    <property type="entry name" value="RapZ-like"/>
</dbReference>
<dbReference type="InterPro" id="IPR053930">
    <property type="entry name" value="RapZ-like_N"/>
</dbReference>
<dbReference type="InterPro" id="IPR053931">
    <property type="entry name" value="RapZ_C"/>
</dbReference>
<dbReference type="NCBIfam" id="NF003828">
    <property type="entry name" value="PRK05416.1"/>
    <property type="match status" value="1"/>
</dbReference>
<dbReference type="PANTHER" id="PTHR30448">
    <property type="entry name" value="RNASE ADAPTER PROTEIN RAPZ"/>
    <property type="match status" value="1"/>
</dbReference>
<dbReference type="PANTHER" id="PTHR30448:SF0">
    <property type="entry name" value="RNASE ADAPTER PROTEIN RAPZ"/>
    <property type="match status" value="1"/>
</dbReference>
<dbReference type="Pfam" id="PF22740">
    <property type="entry name" value="PapZ_C"/>
    <property type="match status" value="1"/>
</dbReference>
<dbReference type="Pfam" id="PF03668">
    <property type="entry name" value="RapZ-like_N"/>
    <property type="match status" value="1"/>
</dbReference>
<dbReference type="PIRSF" id="PIRSF005052">
    <property type="entry name" value="P-loopkin"/>
    <property type="match status" value="1"/>
</dbReference>
<dbReference type="SUPFAM" id="SSF52540">
    <property type="entry name" value="P-loop containing nucleoside triphosphate hydrolases"/>
    <property type="match status" value="1"/>
</dbReference>
<proteinExistence type="inferred from homology"/>
<feature type="chain" id="PRO_0000383295" description="Nucleotide-binding protein SGR_5570">
    <location>
        <begin position="1"/>
        <end position="331"/>
    </location>
</feature>
<feature type="region of interest" description="Disordered" evidence="2">
    <location>
        <begin position="1"/>
        <end position="43"/>
    </location>
</feature>
<feature type="binding site" evidence="1">
    <location>
        <begin position="55"/>
        <end position="62"/>
    </location>
    <ligand>
        <name>ATP</name>
        <dbReference type="ChEBI" id="CHEBI:30616"/>
    </ligand>
</feature>
<feature type="binding site" evidence="1">
    <location>
        <begin position="106"/>
        <end position="109"/>
    </location>
    <ligand>
        <name>GTP</name>
        <dbReference type="ChEBI" id="CHEBI:37565"/>
    </ligand>
</feature>
<gene>
    <name type="ordered locus">SGR_5570</name>
</gene>